<organism>
    <name type="scientific">Actinobacillus pleuropneumoniae serotype 5b (strain L20)</name>
    <dbReference type="NCBI Taxonomy" id="416269"/>
    <lineage>
        <taxon>Bacteria</taxon>
        <taxon>Pseudomonadati</taxon>
        <taxon>Pseudomonadota</taxon>
        <taxon>Gammaproteobacteria</taxon>
        <taxon>Pasteurellales</taxon>
        <taxon>Pasteurellaceae</taxon>
        <taxon>Actinobacillus</taxon>
    </lineage>
</organism>
<accession>A3N2P8</accession>
<gene>
    <name evidence="1" type="primary">rlmH</name>
    <name type="ordered locus">APL_1600</name>
</gene>
<dbReference type="EC" id="2.1.1.177" evidence="1"/>
<dbReference type="EMBL" id="CP000569">
    <property type="protein sequence ID" value="ABN74684.1"/>
    <property type="molecule type" value="Genomic_DNA"/>
</dbReference>
<dbReference type="RefSeq" id="WP_005598965.1">
    <property type="nucleotide sequence ID" value="NC_009053.1"/>
</dbReference>
<dbReference type="SMR" id="A3N2P8"/>
<dbReference type="STRING" id="416269.APL_1600"/>
<dbReference type="EnsemblBacteria" id="ABN74684">
    <property type="protein sequence ID" value="ABN74684"/>
    <property type="gene ID" value="APL_1600"/>
</dbReference>
<dbReference type="GeneID" id="92743802"/>
<dbReference type="KEGG" id="apl:APL_1600"/>
<dbReference type="eggNOG" id="COG1576">
    <property type="taxonomic scope" value="Bacteria"/>
</dbReference>
<dbReference type="HOGENOM" id="CLU_100552_1_0_6"/>
<dbReference type="Proteomes" id="UP000001432">
    <property type="component" value="Chromosome"/>
</dbReference>
<dbReference type="GO" id="GO:0005737">
    <property type="term" value="C:cytoplasm"/>
    <property type="evidence" value="ECO:0007669"/>
    <property type="project" value="UniProtKB-SubCell"/>
</dbReference>
<dbReference type="GO" id="GO:0070038">
    <property type="term" value="F:rRNA (pseudouridine-N3-)-methyltransferase activity"/>
    <property type="evidence" value="ECO:0007669"/>
    <property type="project" value="UniProtKB-UniRule"/>
</dbReference>
<dbReference type="CDD" id="cd18081">
    <property type="entry name" value="RlmH-like"/>
    <property type="match status" value="1"/>
</dbReference>
<dbReference type="Gene3D" id="3.40.1280.10">
    <property type="match status" value="1"/>
</dbReference>
<dbReference type="HAMAP" id="MF_00658">
    <property type="entry name" value="23SrRNA_methyltr_H"/>
    <property type="match status" value="1"/>
</dbReference>
<dbReference type="InterPro" id="IPR029028">
    <property type="entry name" value="Alpha/beta_knot_MTases"/>
</dbReference>
<dbReference type="InterPro" id="IPR003742">
    <property type="entry name" value="RlmH-like"/>
</dbReference>
<dbReference type="InterPro" id="IPR029026">
    <property type="entry name" value="tRNA_m1G_MTases_N"/>
</dbReference>
<dbReference type="NCBIfam" id="NF000984">
    <property type="entry name" value="PRK00103.1-1"/>
    <property type="match status" value="1"/>
</dbReference>
<dbReference type="NCBIfam" id="NF000986">
    <property type="entry name" value="PRK00103.1-4"/>
    <property type="match status" value="1"/>
</dbReference>
<dbReference type="NCBIfam" id="TIGR00246">
    <property type="entry name" value="tRNA_RlmH_YbeA"/>
    <property type="match status" value="1"/>
</dbReference>
<dbReference type="PANTHER" id="PTHR33603">
    <property type="entry name" value="METHYLTRANSFERASE"/>
    <property type="match status" value="1"/>
</dbReference>
<dbReference type="PANTHER" id="PTHR33603:SF1">
    <property type="entry name" value="RIBOSOMAL RNA LARGE SUBUNIT METHYLTRANSFERASE H"/>
    <property type="match status" value="1"/>
</dbReference>
<dbReference type="Pfam" id="PF02590">
    <property type="entry name" value="SPOUT_MTase"/>
    <property type="match status" value="1"/>
</dbReference>
<dbReference type="PIRSF" id="PIRSF004505">
    <property type="entry name" value="MT_bac"/>
    <property type="match status" value="1"/>
</dbReference>
<dbReference type="SUPFAM" id="SSF75217">
    <property type="entry name" value="alpha/beta knot"/>
    <property type="match status" value="1"/>
</dbReference>
<protein>
    <recommendedName>
        <fullName evidence="1">Ribosomal RNA large subunit methyltransferase H</fullName>
        <ecNumber evidence="1">2.1.1.177</ecNumber>
    </recommendedName>
    <alternativeName>
        <fullName evidence="1">23S rRNA (pseudouridine1915-N3)-methyltransferase</fullName>
    </alternativeName>
    <alternativeName>
        <fullName evidence="1">23S rRNA m3Psi1915 methyltransferase</fullName>
    </alternativeName>
    <alternativeName>
        <fullName evidence="1">rRNA (pseudouridine-N3-)-methyltransferase RlmH</fullName>
    </alternativeName>
</protein>
<sequence length="155" mass="17347">MKIQLIAVGQKMPDWVKVGFEEYQRRFPKDMPFELIEIPAGKRGKNADIKRILEQEGKAMLAAAGKGKVVTLDIPGKPWTTEQLASQLEAWKNDGRDVCLLIGGPEGLSPECKAAAEQSWSLSPLTLPHPMVRVIVAESLYRAWSLTTNHPYHRE</sequence>
<comment type="function">
    <text evidence="1">Specifically methylates the pseudouridine at position 1915 (m3Psi1915) in 23S rRNA.</text>
</comment>
<comment type="catalytic activity">
    <reaction evidence="1">
        <text>pseudouridine(1915) in 23S rRNA + S-adenosyl-L-methionine = N(3)-methylpseudouridine(1915) in 23S rRNA + S-adenosyl-L-homocysteine + H(+)</text>
        <dbReference type="Rhea" id="RHEA:42752"/>
        <dbReference type="Rhea" id="RHEA-COMP:10221"/>
        <dbReference type="Rhea" id="RHEA-COMP:10222"/>
        <dbReference type="ChEBI" id="CHEBI:15378"/>
        <dbReference type="ChEBI" id="CHEBI:57856"/>
        <dbReference type="ChEBI" id="CHEBI:59789"/>
        <dbReference type="ChEBI" id="CHEBI:65314"/>
        <dbReference type="ChEBI" id="CHEBI:74486"/>
        <dbReference type="EC" id="2.1.1.177"/>
    </reaction>
</comment>
<comment type="subunit">
    <text evidence="1">Homodimer.</text>
</comment>
<comment type="subcellular location">
    <subcellularLocation>
        <location evidence="1">Cytoplasm</location>
    </subcellularLocation>
</comment>
<comment type="similarity">
    <text evidence="1">Belongs to the RNA methyltransferase RlmH family.</text>
</comment>
<name>RLMH_ACTP2</name>
<proteinExistence type="inferred from homology"/>
<evidence type="ECO:0000255" key="1">
    <source>
        <dbReference type="HAMAP-Rule" id="MF_00658"/>
    </source>
</evidence>
<feature type="chain" id="PRO_1000061750" description="Ribosomal RNA large subunit methyltransferase H">
    <location>
        <begin position="1"/>
        <end position="155"/>
    </location>
</feature>
<feature type="binding site" evidence="1">
    <location>
        <position position="72"/>
    </location>
    <ligand>
        <name>S-adenosyl-L-methionine</name>
        <dbReference type="ChEBI" id="CHEBI:59789"/>
    </ligand>
</feature>
<feature type="binding site" evidence="1">
    <location>
        <position position="103"/>
    </location>
    <ligand>
        <name>S-adenosyl-L-methionine</name>
        <dbReference type="ChEBI" id="CHEBI:59789"/>
    </ligand>
</feature>
<feature type="binding site" evidence="1">
    <location>
        <begin position="122"/>
        <end position="127"/>
    </location>
    <ligand>
        <name>S-adenosyl-L-methionine</name>
        <dbReference type="ChEBI" id="CHEBI:59789"/>
    </ligand>
</feature>
<reference key="1">
    <citation type="journal article" date="2008" name="J. Bacteriol.">
        <title>The complete genome sequence of Actinobacillus pleuropneumoniae L20 (serotype 5b).</title>
        <authorList>
            <person name="Foote S.J."/>
            <person name="Bosse J.T."/>
            <person name="Bouevitch A.B."/>
            <person name="Langford P.R."/>
            <person name="Young N.M."/>
            <person name="Nash J.H.E."/>
        </authorList>
    </citation>
    <scope>NUCLEOTIDE SEQUENCE [LARGE SCALE GENOMIC DNA]</scope>
    <source>
        <strain>L20</strain>
    </source>
</reference>
<keyword id="KW-0963">Cytoplasm</keyword>
<keyword id="KW-0489">Methyltransferase</keyword>
<keyword id="KW-1185">Reference proteome</keyword>
<keyword id="KW-0698">rRNA processing</keyword>
<keyword id="KW-0949">S-adenosyl-L-methionine</keyword>
<keyword id="KW-0808">Transferase</keyword>